<protein>
    <recommendedName>
        <fullName>G2/mitotic-specific cyclin-A</fullName>
    </recommendedName>
</protein>
<keyword id="KW-0131">Cell cycle</keyword>
<keyword id="KW-0132">Cell division</keyword>
<keyword id="KW-0195">Cyclin</keyword>
<keyword id="KW-0498">Mitosis</keyword>
<comment type="function">
    <text>Essential for the control of the cell cycle at the G2/M (mitosis) transition. Interacts with the CDC2 and CDK2 protein kinases to form MPF. G2/M cyclins accumulate steadily during G2 and are abruptly destroyed at mitosis.</text>
</comment>
<comment type="similarity">
    <text evidence="2">Belongs to the cyclin family. Cyclin AB subfamily.</text>
</comment>
<proteinExistence type="evidence at transcript level"/>
<feature type="chain" id="PRO_0000080347" description="G2/mitotic-specific cyclin-A">
    <location>
        <begin position="1"/>
        <end position="422"/>
    </location>
</feature>
<feature type="region of interest" description="Disordered" evidence="1">
    <location>
        <begin position="1"/>
        <end position="29"/>
    </location>
</feature>
<organism>
    <name type="scientific">Spisula solidissima</name>
    <name type="common">Atlantic surf-clam</name>
    <dbReference type="NCBI Taxonomy" id="6584"/>
    <lineage>
        <taxon>Eukaryota</taxon>
        <taxon>Metazoa</taxon>
        <taxon>Spiralia</taxon>
        <taxon>Lophotrochozoa</taxon>
        <taxon>Mollusca</taxon>
        <taxon>Bivalvia</taxon>
        <taxon>Autobranchia</taxon>
        <taxon>Heteroconchia</taxon>
        <taxon>Euheterodonta</taxon>
        <taxon>Imparidentia</taxon>
        <taxon>Neoheterodontei</taxon>
        <taxon>Venerida</taxon>
        <taxon>Mactroidea</taxon>
        <taxon>Mactridae</taxon>
        <taxon>Spisula</taxon>
    </lineage>
</organism>
<dbReference type="EMBL" id="M14535">
    <property type="protein sequence ID" value="AAA98921.1"/>
    <property type="molecule type" value="mRNA"/>
</dbReference>
<dbReference type="EMBL" id="X55127">
    <property type="protein sequence ID" value="CAA38921.1"/>
    <property type="molecule type" value="mRNA"/>
</dbReference>
<dbReference type="PIR" id="A26328">
    <property type="entry name" value="A26328"/>
</dbReference>
<dbReference type="SMR" id="P04962"/>
<dbReference type="GO" id="GO:0016538">
    <property type="term" value="F:cyclin-dependent protein serine/threonine kinase regulator activity"/>
    <property type="evidence" value="ECO:0007669"/>
    <property type="project" value="InterPro"/>
</dbReference>
<dbReference type="GO" id="GO:0051301">
    <property type="term" value="P:cell division"/>
    <property type="evidence" value="ECO:0007669"/>
    <property type="project" value="UniProtKB-KW"/>
</dbReference>
<dbReference type="GO" id="GO:0044772">
    <property type="term" value="P:mitotic cell cycle phase transition"/>
    <property type="evidence" value="ECO:0007669"/>
    <property type="project" value="InterPro"/>
</dbReference>
<dbReference type="CDD" id="cd20504">
    <property type="entry name" value="CYCLIN_CCNA_rpt1"/>
    <property type="match status" value="1"/>
</dbReference>
<dbReference type="CDD" id="cd20505">
    <property type="entry name" value="CYCLIN_CCNA_rpt2"/>
    <property type="match status" value="1"/>
</dbReference>
<dbReference type="FunFam" id="1.10.472.10:FF:000001">
    <property type="entry name" value="G2/mitotic-specific cyclin"/>
    <property type="match status" value="1"/>
</dbReference>
<dbReference type="Gene3D" id="1.10.472.10">
    <property type="entry name" value="Cyclin-like"/>
    <property type="match status" value="2"/>
</dbReference>
<dbReference type="InterPro" id="IPR039361">
    <property type="entry name" value="Cyclin"/>
</dbReference>
<dbReference type="InterPro" id="IPR032447">
    <property type="entry name" value="Cyclin-A_N"/>
</dbReference>
<dbReference type="InterPro" id="IPR013763">
    <property type="entry name" value="Cyclin-like_dom"/>
</dbReference>
<dbReference type="InterPro" id="IPR036915">
    <property type="entry name" value="Cyclin-like_sf"/>
</dbReference>
<dbReference type="InterPro" id="IPR046965">
    <property type="entry name" value="Cyclin_A/B-like"/>
</dbReference>
<dbReference type="InterPro" id="IPR004367">
    <property type="entry name" value="Cyclin_C-dom"/>
</dbReference>
<dbReference type="InterPro" id="IPR006671">
    <property type="entry name" value="Cyclin_N"/>
</dbReference>
<dbReference type="InterPro" id="IPR048258">
    <property type="entry name" value="Cyclins_cyclin-box"/>
</dbReference>
<dbReference type="PANTHER" id="PTHR10177">
    <property type="entry name" value="CYCLINS"/>
    <property type="match status" value="1"/>
</dbReference>
<dbReference type="Pfam" id="PF02984">
    <property type="entry name" value="Cyclin_C"/>
    <property type="match status" value="1"/>
</dbReference>
<dbReference type="Pfam" id="PF00134">
    <property type="entry name" value="Cyclin_N"/>
    <property type="match status" value="1"/>
</dbReference>
<dbReference type="Pfam" id="PF16500">
    <property type="entry name" value="Cyclin_N2"/>
    <property type="match status" value="1"/>
</dbReference>
<dbReference type="PIRSF" id="PIRSF001771">
    <property type="entry name" value="Cyclin_A_B_D_E"/>
    <property type="match status" value="1"/>
</dbReference>
<dbReference type="SMART" id="SM00385">
    <property type="entry name" value="CYCLIN"/>
    <property type="match status" value="2"/>
</dbReference>
<dbReference type="SMART" id="SM01332">
    <property type="entry name" value="Cyclin_C"/>
    <property type="match status" value="1"/>
</dbReference>
<dbReference type="SUPFAM" id="SSF47954">
    <property type="entry name" value="Cyclin-like"/>
    <property type="match status" value="2"/>
</dbReference>
<dbReference type="PROSITE" id="PS00292">
    <property type="entry name" value="CYCLINS"/>
    <property type="match status" value="1"/>
</dbReference>
<evidence type="ECO:0000256" key="1">
    <source>
        <dbReference type="SAM" id="MobiDB-lite"/>
    </source>
</evidence>
<evidence type="ECO:0000305" key="2"/>
<name>CCNA_SPISO</name>
<sequence>MSQPFALHHDGENQMQRRGKMNTRSNGLSGQKRAALGVITNQVNQQVRIQPSRAAKPKSSEFNIQDENAFTKKNAKTFGQQPSQFSVFVDPTPAAPVQKAPTSHVTDIPAALTTLQRVPLTEVPGSPDIISLEDSMESPMILDLPEEEKPLDREAVILTVPEYEEDIYNYLRQAEMKNRAKPGYMKRQTDITTSMRCILVDWLVEVSEEDKLHRETLFLGVNYIDRFLSKISVLRGKLQLVGAASMFLAAKYEEIYPPDVKEFAYITDDTYTSQQVLRMEHLILKVLTFDVAVPTTNWFCEDFLKSCDADDKLKSLTMFLTELTLIDMDAYLKYLPSITAAAALCLARYSLGIEPWPQNLVKKTGYEIGHFVDCLKDLHKTSLGAESHQQQAVQEKYKQDKYHQVSDFSKNPVPHNLALLAL</sequence>
<reference key="1">
    <citation type="journal article" date="1986" name="Cell">
        <title>The clam embryo protein cyclin A induces entry into M phase and the resumption of meiosis in Xenopus oocytes.</title>
        <authorList>
            <person name="Swenson K.I."/>
            <person name="Farrell K.M."/>
            <person name="Ruderman J.V."/>
        </authorList>
    </citation>
    <scope>NUCLEOTIDE SEQUENCE [MRNA]</scope>
</reference>
<reference key="2">
    <citation type="journal article" date="1990" name="Genes Dev.">
        <title>Maternal mRNA from clam oocytes can be specifically unmasked in vitro by antisense RNA complementary to the 3'-untranslated region.</title>
        <authorList>
            <person name="Standart N.M."/>
            <person name="Dale M."/>
            <person name="Stewart E."/>
            <person name="Hunt T."/>
        </authorList>
    </citation>
    <scope>NUCLEOTIDE SEQUENCE [MRNA]</scope>
</reference>
<accession>P04962</accession>